<sequence length="144" mass="15355">MSADDLILHYFEDIKEGQSASLAKTISESDIYLFAGLSMDTNPAHVNEDYAQTTVFKTRIAHGMLSAGFISAVLGTRLPGPGAIYVNQSLKFKAPVRIGDTVTATVTVTGLVPEKKFVTFRTTCTVAGKVVIEGEATVMVPARG</sequence>
<reference key="1">
    <citation type="journal article" date="2000" name="Appl. Microbiol. Biotechnol.">
        <title>Characterization and cloning of an (R)-specific trans-2,3-enoylacyl-CoA hydratase from Rhodospirillum rubrum and use of this enzyme for PHA production in Escherichia coli.</title>
        <authorList>
            <person name="Reiser S.E."/>
            <person name="Mitsky T.A."/>
            <person name="Gruys K.J."/>
        </authorList>
    </citation>
    <scope>NUCLEOTIDE SEQUENCE [GENOMIC DNA]</scope>
    <scope>PROTEIN SEQUENCE OF 2-20 AND 78-91</scope>
    <scope>FUNCTION</scope>
    <scope>CATALYTIC ACTIVITY</scope>
    <scope>SUBSTRATE SPECIFICITY</scope>
    <scope>BIOPHYSICOCHEMICAL PROPERTIES</scope>
    <scope>SUBUNIT</scope>
    <source>
        <strain>S1 / ATCC 25903 / S1H</strain>
    </source>
</reference>
<reference key="2">
    <citation type="journal article" date="2011" name="Stand. Genomic Sci.">
        <title>Complete genome sequence of Rhodospirillum rubrum type strain (S1).</title>
        <authorList>
            <person name="Munk A.C."/>
            <person name="Copeland A."/>
            <person name="Lucas S."/>
            <person name="Lapidus A."/>
            <person name="Del Rio T.G."/>
            <person name="Barry K."/>
            <person name="Detter J.C."/>
            <person name="Hammon N."/>
            <person name="Israni S."/>
            <person name="Pitluck S."/>
            <person name="Brettin T."/>
            <person name="Bruce D."/>
            <person name="Han C."/>
            <person name="Tapia R."/>
            <person name="Gilna P."/>
            <person name="Schmutz J."/>
            <person name="Larimer F."/>
            <person name="Land M."/>
            <person name="Kyrpides N.C."/>
            <person name="Mavromatis K."/>
            <person name="Richardson P."/>
            <person name="Rohde M."/>
            <person name="Goeker M."/>
            <person name="Klenk H.P."/>
            <person name="Zhang Y."/>
            <person name="Roberts G.P."/>
            <person name="Reslewic S."/>
            <person name="Schwartz D.C."/>
        </authorList>
    </citation>
    <scope>NUCLEOTIDE SEQUENCE [LARGE SCALE GENOMIC DNA]</scope>
    <source>
        <strain>ATCC 11170 / ATH 1.1.1 / DSM 467 / LMG 4362 / NCIMB 8255 / S1</strain>
    </source>
</reference>
<keyword id="KW-0903">Direct protein sequencing</keyword>
<keyword id="KW-0276">Fatty acid metabolism</keyword>
<keyword id="KW-0443">Lipid metabolism</keyword>
<keyword id="KW-0456">Lyase</keyword>
<keyword id="KW-1185">Reference proteome</keyword>
<evidence type="ECO:0000255" key="1"/>
<evidence type="ECO:0000269" key="2">
    <source>
    </source>
</evidence>
<evidence type="ECO:0000303" key="3">
    <source>
    </source>
</evidence>
<evidence type="ECO:0000305" key="4"/>
<evidence type="ECO:0000312" key="5">
    <source>
        <dbReference type="EMBL" id="ABC23759.1"/>
    </source>
</evidence>
<accession>Q2RQ36</accession>
<accession>Q9L9X2</accession>
<protein>
    <recommendedName>
        <fullName>(R)-specific enoyl-CoA hydratase</fullName>
        <ecNumber evidence="2">4.2.1.119</ecNumber>
    </recommendedName>
    <alternativeName>
        <fullName evidence="3">(R)-specific trans-2,3-enoylacyl-CoA hydratase</fullName>
    </alternativeName>
</protein>
<gene>
    <name evidence="3" type="primary">phaJ</name>
    <name evidence="5" type="ordered locus">Rru_A2964</name>
</gene>
<dbReference type="EC" id="4.2.1.119" evidence="2"/>
<dbReference type="EMBL" id="AF156879">
    <property type="protein sequence ID" value="AAF60220.1"/>
    <property type="status" value="ALT_FRAME"/>
    <property type="molecule type" value="Genomic_DNA"/>
</dbReference>
<dbReference type="EMBL" id="CP000230">
    <property type="protein sequence ID" value="ABC23759.1"/>
    <property type="molecule type" value="Genomic_DNA"/>
</dbReference>
<dbReference type="RefSeq" id="WP_011390712.1">
    <property type="nucleotide sequence ID" value="NC_007643.1"/>
</dbReference>
<dbReference type="RefSeq" id="YP_428046.1">
    <property type="nucleotide sequence ID" value="NC_007643.1"/>
</dbReference>
<dbReference type="SMR" id="Q2RQ36"/>
<dbReference type="STRING" id="269796.Rru_A2964"/>
<dbReference type="EnsemblBacteria" id="ABC23759">
    <property type="protein sequence ID" value="ABC23759"/>
    <property type="gene ID" value="Rru_A2964"/>
</dbReference>
<dbReference type="KEGG" id="rru:Rru_A2964"/>
<dbReference type="PATRIC" id="fig|269796.9.peg.3073"/>
<dbReference type="eggNOG" id="COG2030">
    <property type="taxonomic scope" value="Bacteria"/>
</dbReference>
<dbReference type="HOGENOM" id="CLU_094876_3_3_5"/>
<dbReference type="PhylomeDB" id="Q2RQ36"/>
<dbReference type="SABIO-RK" id="Q2RQ36"/>
<dbReference type="Proteomes" id="UP000001929">
    <property type="component" value="Chromosome"/>
</dbReference>
<dbReference type="GO" id="GO:0019171">
    <property type="term" value="F:(3R)-hydroxyacyl-[acyl-carrier-protein] dehydratase activity"/>
    <property type="evidence" value="ECO:0007669"/>
    <property type="project" value="TreeGrafter"/>
</dbReference>
<dbReference type="GO" id="GO:0016836">
    <property type="term" value="F:hydro-lyase activity"/>
    <property type="evidence" value="ECO:0000314"/>
    <property type="project" value="UniProtKB"/>
</dbReference>
<dbReference type="GO" id="GO:0006633">
    <property type="term" value="P:fatty acid biosynthetic process"/>
    <property type="evidence" value="ECO:0007669"/>
    <property type="project" value="TreeGrafter"/>
</dbReference>
<dbReference type="GO" id="GO:0042621">
    <property type="term" value="P:poly(3-hydroxyalkanoate) biosynthetic process"/>
    <property type="evidence" value="ECO:0000314"/>
    <property type="project" value="UniProtKB"/>
</dbReference>
<dbReference type="GO" id="GO:0051289">
    <property type="term" value="P:protein homotetramerization"/>
    <property type="evidence" value="ECO:0000314"/>
    <property type="project" value="UniProtKB"/>
</dbReference>
<dbReference type="CDD" id="cd03449">
    <property type="entry name" value="R_hydratase"/>
    <property type="match status" value="1"/>
</dbReference>
<dbReference type="FunFam" id="3.10.129.10:FF:000042">
    <property type="entry name" value="MaoC domain protein dehydratase"/>
    <property type="match status" value="1"/>
</dbReference>
<dbReference type="Gene3D" id="3.10.129.10">
    <property type="entry name" value="Hotdog Thioesterase"/>
    <property type="match status" value="1"/>
</dbReference>
<dbReference type="InterPro" id="IPR029069">
    <property type="entry name" value="HotDog_dom_sf"/>
</dbReference>
<dbReference type="InterPro" id="IPR002539">
    <property type="entry name" value="MaoC-like_dom"/>
</dbReference>
<dbReference type="InterPro" id="IPR050965">
    <property type="entry name" value="UPF0336/Enoyl-CoA_hydratase"/>
</dbReference>
<dbReference type="PANTHER" id="PTHR43437:SF3">
    <property type="entry name" value="HYDROXYACYL-THIOESTER DEHYDRATASE TYPE 2, MITOCHONDRIAL"/>
    <property type="match status" value="1"/>
</dbReference>
<dbReference type="PANTHER" id="PTHR43437">
    <property type="entry name" value="HYDROXYACYL-THIOESTER DEHYDRATASE TYPE 2, MITOCHONDRIAL-RELATED"/>
    <property type="match status" value="1"/>
</dbReference>
<dbReference type="Pfam" id="PF01575">
    <property type="entry name" value="MaoC_dehydratas"/>
    <property type="match status" value="1"/>
</dbReference>
<dbReference type="SUPFAM" id="SSF54637">
    <property type="entry name" value="Thioesterase/thiol ester dehydrase-isomerase"/>
    <property type="match status" value="1"/>
</dbReference>
<feature type="initiator methionine" description="Removed" evidence="2">
    <location>
        <position position="1"/>
    </location>
</feature>
<feature type="chain" id="PRO_0000433082" description="(R)-specific enoyl-CoA hydratase">
    <location>
        <begin position="2"/>
        <end position="144"/>
    </location>
</feature>
<feature type="domain" description="MaoC-like" evidence="1">
    <location>
        <begin position="13"/>
        <end position="128"/>
    </location>
</feature>
<feature type="sequence conflict" description="In Ref. 1; AAF60220." evidence="4" ref="1">
    <original>T</original>
    <variation>N</variation>
    <location>
        <position position="76"/>
    </location>
</feature>
<name>PHAJ_RHORT</name>
<organism>
    <name type="scientific">Rhodospirillum rubrum (strain ATCC 11170 / ATH 1.1.1 / DSM 467 / LMG 4362 / NCIMB 8255 / S1)</name>
    <dbReference type="NCBI Taxonomy" id="269796"/>
    <lineage>
        <taxon>Bacteria</taxon>
        <taxon>Pseudomonadati</taxon>
        <taxon>Pseudomonadota</taxon>
        <taxon>Alphaproteobacteria</taxon>
        <taxon>Rhodospirillales</taxon>
        <taxon>Rhodospirillaceae</taxon>
        <taxon>Rhodospirillum</taxon>
    </lineage>
</organism>
<proteinExistence type="evidence at protein level"/>
<comment type="function">
    <text evidence="2">Catalyzes the hydration of trans-2-enoyl-CoAs with a chain-length of 4-6 carbon atoms, forming the corresponding (3R)-3-hydroxyacyl-CoAs, which can then be utilized for the production of polyhydroxyalkanoates (PHA) polymers. Cannot use trans-2,3-octenoyl-CoA as substrate.</text>
</comment>
<comment type="catalytic activity">
    <reaction evidence="2">
        <text>a (3R)-3-hydroxyacyl-CoA = a (2E)-enoyl-CoA + H2O</text>
        <dbReference type="Rhea" id="RHEA:26526"/>
        <dbReference type="ChEBI" id="CHEBI:15377"/>
        <dbReference type="ChEBI" id="CHEBI:57319"/>
        <dbReference type="ChEBI" id="CHEBI:58856"/>
        <dbReference type="EC" id="4.2.1.119"/>
    </reaction>
</comment>
<comment type="biophysicochemical properties">
    <kinetics>
        <KM evidence="2">21.4 uM for crotonyl-CoA</KM>
        <KM evidence="2">9 uM for trans-2,3-pentenoyl-CoA</KM>
        <KM evidence="2">9.1 uM for trans-2,3-hexenoyl-CoA</KM>
        <Vmax evidence="2">2850.0 umol/min/mg enzyme with crotonyl-CoA as substrate</Vmax>
        <Vmax evidence="2">798.0 umol/min/mg enzyme with trans-2,3-pentenoyl-CoA as substrate</Vmax>
        <Vmax evidence="2">986.0 umol/min/mg enzyme with trans-2,3-hexenoyl-CoA as substrate</Vmax>
        <text evidence="2">kcat is 728 sec(-1) with crotonyl-CoA as substrate. kcat is 204 sec(-1) with trans-2,3-pentenoyl-CoA as substrate. kcat is 252 sec(-1) with trans-2,3-hexenoyl-CoA as substrate.</text>
    </kinetics>
</comment>
<comment type="subunit">
    <text evidence="2">Homotetramer.</text>
</comment>
<comment type="sequence caution" evidence="4">
    <conflict type="frameshift">
        <sequence resource="EMBL-CDS" id="AAF60220"/>
    </conflict>
</comment>